<reference key="1">
    <citation type="journal article" date="2005" name="Nature">
        <title>Genomic sequence of the pathogenic and allergenic filamentous fungus Aspergillus fumigatus.</title>
        <authorList>
            <person name="Nierman W.C."/>
            <person name="Pain A."/>
            <person name="Anderson M.J."/>
            <person name="Wortman J.R."/>
            <person name="Kim H.S."/>
            <person name="Arroyo J."/>
            <person name="Berriman M."/>
            <person name="Abe K."/>
            <person name="Archer D.B."/>
            <person name="Bermejo C."/>
            <person name="Bennett J.W."/>
            <person name="Bowyer P."/>
            <person name="Chen D."/>
            <person name="Collins M."/>
            <person name="Coulsen R."/>
            <person name="Davies R."/>
            <person name="Dyer P.S."/>
            <person name="Farman M.L."/>
            <person name="Fedorova N."/>
            <person name="Fedorova N.D."/>
            <person name="Feldblyum T.V."/>
            <person name="Fischer R."/>
            <person name="Fosker N."/>
            <person name="Fraser A."/>
            <person name="Garcia J.L."/>
            <person name="Garcia M.J."/>
            <person name="Goble A."/>
            <person name="Goldman G.H."/>
            <person name="Gomi K."/>
            <person name="Griffith-Jones S."/>
            <person name="Gwilliam R."/>
            <person name="Haas B.J."/>
            <person name="Haas H."/>
            <person name="Harris D.E."/>
            <person name="Horiuchi H."/>
            <person name="Huang J."/>
            <person name="Humphray S."/>
            <person name="Jimenez J."/>
            <person name="Keller N."/>
            <person name="Khouri H."/>
            <person name="Kitamoto K."/>
            <person name="Kobayashi T."/>
            <person name="Konzack S."/>
            <person name="Kulkarni R."/>
            <person name="Kumagai T."/>
            <person name="Lafton A."/>
            <person name="Latge J.-P."/>
            <person name="Li W."/>
            <person name="Lord A."/>
            <person name="Lu C."/>
            <person name="Majoros W.H."/>
            <person name="May G.S."/>
            <person name="Miller B.L."/>
            <person name="Mohamoud Y."/>
            <person name="Molina M."/>
            <person name="Monod M."/>
            <person name="Mouyna I."/>
            <person name="Mulligan S."/>
            <person name="Murphy L.D."/>
            <person name="O'Neil S."/>
            <person name="Paulsen I."/>
            <person name="Penalva M.A."/>
            <person name="Pertea M."/>
            <person name="Price C."/>
            <person name="Pritchard B.L."/>
            <person name="Quail M.A."/>
            <person name="Rabbinowitsch E."/>
            <person name="Rawlins N."/>
            <person name="Rajandream M.A."/>
            <person name="Reichard U."/>
            <person name="Renauld H."/>
            <person name="Robson G.D."/>
            <person name="Rodriguez de Cordoba S."/>
            <person name="Rodriguez-Pena J.M."/>
            <person name="Ronning C.M."/>
            <person name="Rutter S."/>
            <person name="Salzberg S.L."/>
            <person name="Sanchez M."/>
            <person name="Sanchez-Ferrero J.C."/>
            <person name="Saunders D."/>
            <person name="Seeger K."/>
            <person name="Squares R."/>
            <person name="Squares S."/>
            <person name="Takeuchi M."/>
            <person name="Tekaia F."/>
            <person name="Turner G."/>
            <person name="Vazquez de Aldana C.R."/>
            <person name="Weidman J."/>
            <person name="White O."/>
            <person name="Woodward J.R."/>
            <person name="Yu J.-H."/>
            <person name="Fraser C.M."/>
            <person name="Galagan J.E."/>
            <person name="Asai K."/>
            <person name="Machida M."/>
            <person name="Hall N."/>
            <person name="Barrell B.G."/>
            <person name="Denning D.W."/>
        </authorList>
    </citation>
    <scope>NUCLEOTIDE SEQUENCE [LARGE SCALE GENOMIC DNA]</scope>
    <source>
        <strain>ATCC MYA-4609 / CBS 101355 / FGSC A1100 / Af293</strain>
    </source>
</reference>
<sequence length="1011" mass="111734">MKSLLKRLIALAAAYSVAAAPSFSHHSSQDAANKRELLQDLVTWDQHSLFVRGERLMIFSGEFHPFRLPVPGLWFDVFQKIKSLGFNAVSFYTDWGLMEGNPGHVVTDGIWSLDEFFTAAREAGLYLIARPGPYINAETSAGGIPGWVLRRKGIIRSNSEDYLRATDTYMATLGKIIAKAQITNGGPVILVQPENEYTTWPNVSESEFPTTMNQEVMAYAEKQLRDAGVVVPTVVNDNKNLGYFAPGTGLGETDLYGIDAYPMRYDCGNPYVWPTYRFPRDWQHEHRNHSPTTPFAIMEFQGGSGDGWGGVTEDGCAILVNNEAVRVVYKNNYGFGVRVFNIYMTYGGTNWGNLGYYGGYTSYDYGAAITEDRQIWREKYSEEKLQANFLKVSPAYLTSTPGNGVNGSYTGNKDITVTPLFGNGTTTNLYLVRHADFTSTGSAQYNLSISTSVGNVTIPQLGGSLSLNGRDSKFHITDYDVGGFNLIYSSAEVFTWAKGDNKKRVLVLYGGAGELHEFALPKHLPRPTVVEGSYVKIAKQGSAWVVQWEVAAQRRVLRAGKLEIHLLWRNDAYQHWVLELPAKQPIANYSSPSKETVIVKGGYLLRSAWITDNDLHLTGDVNVTTPLEVISAPKRFDGIVFNGQSLKSTRSKIGNLAATVHYQPPAISLPDLKRLDWKYIDSLPEISTEYNDEGWTPLTNTYTNNTREFTGPTCLYADDYGYHGGSLIYRGHFTANGDESWVFLNTSGGVGFANSVWLNQTFLGSWTGSGRNMTYPRNISLPHELSPGEPYVFTVVIDHMGQDEEAPGTDAIKFPRGILDYALSGHELSDLRWKMTGNLGGEQYQDLTRGPLNEGAMYAERQGYHLPSPPTSSWKSSNPIKEGLTGAGIGFYATSFSLDLPEGYDIPLSFRFNNSASAARSGTSYRCQLFVNGYQFGKYVNDLGPQTKFPVPEGILNYNGVNYVAVSLWALESQGALIGGLDLVASTPILSGYRKPAPAPQPGWKPRRGAY</sequence>
<dbReference type="EC" id="3.2.1.23"/>
<dbReference type="EMBL" id="AAHF01000010">
    <property type="protein sequence ID" value="EAL86322.1"/>
    <property type="molecule type" value="Genomic_DNA"/>
</dbReference>
<dbReference type="RefSeq" id="XP_748360.1">
    <property type="nucleotide sequence ID" value="XM_743267.1"/>
</dbReference>
<dbReference type="SMR" id="Q4WG05"/>
<dbReference type="STRING" id="330879.Q4WG05"/>
<dbReference type="GlyCosmos" id="Q4WG05">
    <property type="glycosylation" value="13 sites, No reported glycans"/>
</dbReference>
<dbReference type="EnsemblFungi" id="EAL86322">
    <property type="protein sequence ID" value="EAL86322"/>
    <property type="gene ID" value="AFUA_3G00380"/>
</dbReference>
<dbReference type="GeneID" id="3505787"/>
<dbReference type="KEGG" id="afm:AFUA_3G00380"/>
<dbReference type="VEuPathDB" id="FungiDB:Afu3g00380"/>
<dbReference type="eggNOG" id="KOG0496">
    <property type="taxonomic scope" value="Eukaryota"/>
</dbReference>
<dbReference type="HOGENOM" id="CLU_005732_2_0_1"/>
<dbReference type="InParanoid" id="Q4WG05"/>
<dbReference type="OMA" id="IDAYPMR"/>
<dbReference type="OrthoDB" id="1657402at2759"/>
<dbReference type="Proteomes" id="UP000002530">
    <property type="component" value="Chromosome 3"/>
</dbReference>
<dbReference type="GO" id="GO:0005576">
    <property type="term" value="C:extracellular region"/>
    <property type="evidence" value="ECO:0007669"/>
    <property type="project" value="UniProtKB-SubCell"/>
</dbReference>
<dbReference type="GO" id="GO:0005773">
    <property type="term" value="C:vacuole"/>
    <property type="evidence" value="ECO:0000318"/>
    <property type="project" value="GO_Central"/>
</dbReference>
<dbReference type="GO" id="GO:0004565">
    <property type="term" value="F:beta-galactosidase activity"/>
    <property type="evidence" value="ECO:0000318"/>
    <property type="project" value="GO_Central"/>
</dbReference>
<dbReference type="GO" id="GO:0019388">
    <property type="term" value="P:galactose catabolic process"/>
    <property type="evidence" value="ECO:0000318"/>
    <property type="project" value="GO_Central"/>
</dbReference>
<dbReference type="GO" id="GO:0000272">
    <property type="term" value="P:polysaccharide catabolic process"/>
    <property type="evidence" value="ECO:0007669"/>
    <property type="project" value="UniProtKB-KW"/>
</dbReference>
<dbReference type="FunFam" id="2.102.20.10:FF:000001">
    <property type="entry name" value="Beta-galactosidase A"/>
    <property type="match status" value="1"/>
</dbReference>
<dbReference type="FunFam" id="2.60.120.260:FF:000065">
    <property type="entry name" value="Beta-galactosidase A"/>
    <property type="match status" value="1"/>
</dbReference>
<dbReference type="FunFam" id="2.60.120.260:FF:000088">
    <property type="entry name" value="Beta-galactosidase A"/>
    <property type="match status" value="1"/>
</dbReference>
<dbReference type="FunFam" id="2.60.390.10:FF:000001">
    <property type="entry name" value="Beta-galactosidase A"/>
    <property type="match status" value="1"/>
</dbReference>
<dbReference type="FunFam" id="3.20.20.80:FF:000040">
    <property type="entry name" value="Beta-galactosidase A"/>
    <property type="match status" value="1"/>
</dbReference>
<dbReference type="Gene3D" id="2.102.20.10">
    <property type="entry name" value="Beta-galactosidase, domain 2"/>
    <property type="match status" value="1"/>
</dbReference>
<dbReference type="Gene3D" id="2.60.390.10">
    <property type="entry name" value="Beta-galactosidase, domain 3"/>
    <property type="match status" value="1"/>
</dbReference>
<dbReference type="Gene3D" id="2.60.120.260">
    <property type="entry name" value="Galactose-binding domain-like"/>
    <property type="match status" value="2"/>
</dbReference>
<dbReference type="Gene3D" id="3.20.20.80">
    <property type="entry name" value="Glycosidases"/>
    <property type="match status" value="1"/>
</dbReference>
<dbReference type="InterPro" id="IPR018954">
    <property type="entry name" value="Betagal_dom2"/>
</dbReference>
<dbReference type="InterPro" id="IPR037110">
    <property type="entry name" value="Betagal_dom2_sf"/>
</dbReference>
<dbReference type="InterPro" id="IPR025972">
    <property type="entry name" value="BetaGal_dom3"/>
</dbReference>
<dbReference type="InterPro" id="IPR036833">
    <property type="entry name" value="BetaGal_dom3_sf"/>
</dbReference>
<dbReference type="InterPro" id="IPR025300">
    <property type="entry name" value="BetaGal_jelly_roll_dom"/>
</dbReference>
<dbReference type="InterPro" id="IPR008979">
    <property type="entry name" value="Galactose-bd-like_sf"/>
</dbReference>
<dbReference type="InterPro" id="IPR031330">
    <property type="entry name" value="Gly_Hdrlase_35_cat"/>
</dbReference>
<dbReference type="InterPro" id="IPR019801">
    <property type="entry name" value="Glyco_hydro_35_CS"/>
</dbReference>
<dbReference type="InterPro" id="IPR001944">
    <property type="entry name" value="Glycoside_Hdrlase_35"/>
</dbReference>
<dbReference type="InterPro" id="IPR017853">
    <property type="entry name" value="Glycoside_hydrolase_SF"/>
</dbReference>
<dbReference type="PANTHER" id="PTHR23421">
    <property type="entry name" value="BETA-GALACTOSIDASE RELATED"/>
    <property type="match status" value="1"/>
</dbReference>
<dbReference type="Pfam" id="PF13364">
    <property type="entry name" value="BetaGal_ABD2"/>
    <property type="match status" value="2"/>
</dbReference>
<dbReference type="Pfam" id="PF10435">
    <property type="entry name" value="BetaGal_dom2"/>
    <property type="match status" value="1"/>
</dbReference>
<dbReference type="Pfam" id="PF13363">
    <property type="entry name" value="BetaGal_dom3"/>
    <property type="match status" value="1"/>
</dbReference>
<dbReference type="Pfam" id="PF01301">
    <property type="entry name" value="Glyco_hydro_35"/>
    <property type="match status" value="1"/>
</dbReference>
<dbReference type="PRINTS" id="PR00742">
    <property type="entry name" value="GLHYDRLASE35"/>
</dbReference>
<dbReference type="SMART" id="SM01029">
    <property type="entry name" value="BetaGal_dom2"/>
    <property type="match status" value="1"/>
</dbReference>
<dbReference type="SUPFAM" id="SSF51445">
    <property type="entry name" value="(Trans)glycosidases"/>
    <property type="match status" value="1"/>
</dbReference>
<dbReference type="SUPFAM" id="SSF117100">
    <property type="entry name" value="Beta-galactosidase LacA, domain 3"/>
    <property type="match status" value="1"/>
</dbReference>
<dbReference type="SUPFAM" id="SSF49785">
    <property type="entry name" value="Galactose-binding domain-like"/>
    <property type="match status" value="2"/>
</dbReference>
<dbReference type="SUPFAM" id="SSF51011">
    <property type="entry name" value="Glycosyl hydrolase domain"/>
    <property type="match status" value="1"/>
</dbReference>
<dbReference type="PROSITE" id="PS01182">
    <property type="entry name" value="GLYCOSYL_HYDROL_F35"/>
    <property type="match status" value="1"/>
</dbReference>
<feature type="signal peptide" evidence="2">
    <location>
        <begin position="1"/>
        <end position="19"/>
    </location>
</feature>
<feature type="chain" id="PRO_0000395243" description="Probable beta-galactosidase E">
    <location>
        <begin position="20"/>
        <end position="1011"/>
    </location>
</feature>
<feature type="active site" description="Proton donor" evidence="2">
    <location>
        <position position="196"/>
    </location>
</feature>
<feature type="active site" description="Nucleophile" evidence="2">
    <location>
        <position position="299"/>
    </location>
</feature>
<feature type="binding site" evidence="1">
    <location>
        <position position="92"/>
    </location>
    <ligand>
        <name>substrate</name>
    </ligand>
</feature>
<feature type="binding site" evidence="1">
    <location>
        <position position="136"/>
    </location>
    <ligand>
        <name>substrate</name>
    </ligand>
</feature>
<feature type="binding site" evidence="1">
    <location>
        <position position="137"/>
    </location>
    <ligand>
        <name>substrate</name>
    </ligand>
</feature>
<feature type="binding site" evidence="1">
    <location>
        <position position="138"/>
    </location>
    <ligand>
        <name>substrate</name>
    </ligand>
</feature>
<feature type="binding site" evidence="1">
    <location>
        <position position="195"/>
    </location>
    <ligand>
        <name>substrate</name>
    </ligand>
</feature>
<feature type="binding site" evidence="1">
    <location>
        <position position="261"/>
    </location>
    <ligand>
        <name>substrate</name>
    </ligand>
</feature>
<feature type="binding site" evidence="1">
    <location>
        <position position="365"/>
    </location>
    <ligand>
        <name>substrate</name>
    </ligand>
</feature>
<feature type="glycosylation site" description="N-linked (GlcNAc...) asparagine" evidence="2">
    <location>
        <position position="202"/>
    </location>
</feature>
<feature type="glycosylation site" description="N-linked (GlcNAc...) asparagine" evidence="2">
    <location>
        <position position="406"/>
    </location>
</feature>
<feature type="glycosylation site" description="N-linked (GlcNAc...) asparagine" evidence="2">
    <location>
        <position position="423"/>
    </location>
</feature>
<feature type="glycosylation site" description="N-linked (GlcNAc...) asparagine" evidence="2">
    <location>
        <position position="446"/>
    </location>
</feature>
<feature type="glycosylation site" description="N-linked (GlcNAc...) asparagine" evidence="2">
    <location>
        <position position="455"/>
    </location>
</feature>
<feature type="glycosylation site" description="N-linked (GlcNAc...) asparagine" evidence="2">
    <location>
        <position position="588"/>
    </location>
</feature>
<feature type="glycosylation site" description="N-linked (GlcNAc...) asparagine" evidence="2">
    <location>
        <position position="622"/>
    </location>
</feature>
<feature type="glycosylation site" description="N-linked (GlcNAc...) asparagine" evidence="2">
    <location>
        <position position="704"/>
    </location>
</feature>
<feature type="glycosylation site" description="N-linked (GlcNAc...) asparagine" evidence="2">
    <location>
        <position position="745"/>
    </location>
</feature>
<feature type="glycosylation site" description="N-linked (GlcNAc...) asparagine" evidence="2">
    <location>
        <position position="759"/>
    </location>
</feature>
<feature type="glycosylation site" description="N-linked (GlcNAc...) asparagine" evidence="2">
    <location>
        <position position="772"/>
    </location>
</feature>
<feature type="glycosylation site" description="N-linked (GlcNAc...) asparagine" evidence="2">
    <location>
        <position position="778"/>
    </location>
</feature>
<feature type="glycosylation site" description="N-linked (GlcNAc...) asparagine" evidence="2">
    <location>
        <position position="913"/>
    </location>
</feature>
<feature type="disulfide bond" evidence="1">
    <location>
        <begin position="267"/>
        <end position="316"/>
    </location>
</feature>
<organism>
    <name type="scientific">Aspergillus fumigatus (strain ATCC MYA-4609 / CBS 101355 / FGSC A1100 / Af293)</name>
    <name type="common">Neosartorya fumigata</name>
    <dbReference type="NCBI Taxonomy" id="330879"/>
    <lineage>
        <taxon>Eukaryota</taxon>
        <taxon>Fungi</taxon>
        <taxon>Dikarya</taxon>
        <taxon>Ascomycota</taxon>
        <taxon>Pezizomycotina</taxon>
        <taxon>Eurotiomycetes</taxon>
        <taxon>Eurotiomycetidae</taxon>
        <taxon>Eurotiales</taxon>
        <taxon>Aspergillaceae</taxon>
        <taxon>Aspergillus</taxon>
        <taxon>Aspergillus subgen. Fumigati</taxon>
    </lineage>
</organism>
<keyword id="KW-0119">Carbohydrate metabolism</keyword>
<keyword id="KW-1015">Disulfide bond</keyword>
<keyword id="KW-0325">Glycoprotein</keyword>
<keyword id="KW-0326">Glycosidase</keyword>
<keyword id="KW-0378">Hydrolase</keyword>
<keyword id="KW-0624">Polysaccharide degradation</keyword>
<keyword id="KW-1185">Reference proteome</keyword>
<keyword id="KW-0964">Secreted</keyword>
<keyword id="KW-0732">Signal</keyword>
<proteinExistence type="inferred from homology"/>
<evidence type="ECO:0000250" key="1"/>
<evidence type="ECO:0000255" key="2"/>
<evidence type="ECO:0000305" key="3"/>
<accession>Q4WG05</accession>
<protein>
    <recommendedName>
        <fullName>Probable beta-galactosidase E</fullName>
        <ecNumber>3.2.1.23</ecNumber>
    </recommendedName>
    <alternativeName>
        <fullName>Lactase E</fullName>
    </alternativeName>
</protein>
<comment type="function">
    <text evidence="1">Cleaves beta-linked terminal galactosyl residues from gangliosides, glycoproteins, and glycosaminoglycans.</text>
</comment>
<comment type="catalytic activity">
    <reaction>
        <text>Hydrolysis of terminal non-reducing beta-D-galactose residues in beta-D-galactosides.</text>
        <dbReference type="EC" id="3.2.1.23"/>
    </reaction>
</comment>
<comment type="subcellular location">
    <subcellularLocation>
        <location evidence="1">Secreted</location>
    </subcellularLocation>
</comment>
<comment type="similarity">
    <text evidence="3">Belongs to the glycosyl hydrolase 35 family.</text>
</comment>
<name>BGALE_ASPFU</name>
<gene>
    <name type="primary">lacE</name>
    <name type="ORF">AFUA_3G00380</name>
</gene>